<reference key="1">
    <citation type="submission" date="2004-11" db="EMBL/GenBank/DDBJ databases">
        <authorList>
            <consortium name="The German cDNA consortium"/>
        </authorList>
    </citation>
    <scope>NUCLEOTIDE SEQUENCE [LARGE SCALE MRNA]</scope>
    <source>
        <tissue>Heart</tissue>
    </source>
</reference>
<comment type="function">
    <text evidence="2">PPIase which accelerates the folding of proteins during protein synthesis. Has a preference for substrates containing 4-hydroxylproline modifications, including type III collagen. May also target type VI and type X collagens.</text>
</comment>
<comment type="catalytic activity">
    <reaction evidence="2">
        <text>[protein]-peptidylproline (omega=180) = [protein]-peptidylproline (omega=0)</text>
        <dbReference type="Rhea" id="RHEA:16237"/>
        <dbReference type="Rhea" id="RHEA-COMP:10747"/>
        <dbReference type="Rhea" id="RHEA-COMP:10748"/>
        <dbReference type="ChEBI" id="CHEBI:83833"/>
        <dbReference type="ChEBI" id="CHEBI:83834"/>
        <dbReference type="EC" id="5.2.1.8"/>
    </reaction>
</comment>
<comment type="activity regulation">
    <text evidence="2">Inhibited by tacrolimus/FK506.</text>
</comment>
<comment type="subunit">
    <text evidence="2">Monomer. Homodimer. Interacts with type III, type IV and type X collagens.</text>
</comment>
<comment type="subcellular location">
    <subcellularLocation>
        <location evidence="6">Endoplasmic reticulum lumen</location>
    </subcellularLocation>
</comment>
<protein>
    <recommendedName>
        <fullName>Peptidyl-prolyl cis-trans isomerase FKBP14</fullName>
        <shortName>PPIase FKBP14</shortName>
        <ecNumber evidence="2">5.2.1.8</ecNumber>
    </recommendedName>
    <alternativeName>
        <fullName>FK506-binding protein 14</fullName>
        <shortName>FKBP-14</shortName>
    </alternativeName>
    <alternativeName>
        <fullName>Rotamase</fullName>
    </alternativeName>
</protein>
<keyword id="KW-0106">Calcium</keyword>
<keyword id="KW-1015">Disulfide bond</keyword>
<keyword id="KW-0256">Endoplasmic reticulum</keyword>
<keyword id="KW-0325">Glycoprotein</keyword>
<keyword id="KW-0413">Isomerase</keyword>
<keyword id="KW-0479">Metal-binding</keyword>
<keyword id="KW-1185">Reference proteome</keyword>
<keyword id="KW-0677">Repeat</keyword>
<keyword id="KW-0697">Rotamase</keyword>
<keyword id="KW-0732">Signal</keyword>
<proteinExistence type="evidence at transcript level"/>
<feature type="signal peptide" evidence="1">
    <location>
        <begin position="1"/>
        <end position="19"/>
    </location>
</feature>
<feature type="chain" id="PRO_0000025523" description="Peptidyl-prolyl cis-trans isomerase FKBP14">
    <location>
        <begin position="20"/>
        <end position="211"/>
    </location>
</feature>
<feature type="domain" description="PPIase FKBP-type" evidence="4">
    <location>
        <begin position="45"/>
        <end position="135"/>
    </location>
</feature>
<feature type="domain" description="EF-hand 1" evidence="5">
    <location>
        <begin position="135"/>
        <end position="170"/>
    </location>
</feature>
<feature type="domain" description="EF-hand 2" evidence="5">
    <location>
        <begin position="179"/>
        <end position="211"/>
    </location>
</feature>
<feature type="short sequence motif" description="Prevents secretion from ER" evidence="6">
    <location>
        <begin position="208"/>
        <end position="211"/>
    </location>
</feature>
<feature type="binding site" evidence="7">
    <location>
        <position position="148"/>
    </location>
    <ligand>
        <name>Ca(2+)</name>
        <dbReference type="ChEBI" id="CHEBI:29108"/>
        <label>1</label>
    </ligand>
</feature>
<feature type="binding site" evidence="7">
    <location>
        <position position="150"/>
    </location>
    <ligand>
        <name>Ca(2+)</name>
        <dbReference type="ChEBI" id="CHEBI:29108"/>
        <label>1</label>
    </ligand>
</feature>
<feature type="binding site" evidence="7">
    <location>
        <position position="152"/>
    </location>
    <ligand>
        <name>Ca(2+)</name>
        <dbReference type="ChEBI" id="CHEBI:29108"/>
        <label>1</label>
    </ligand>
</feature>
<feature type="binding site" evidence="7">
    <location>
        <position position="154"/>
    </location>
    <ligand>
        <name>Ca(2+)</name>
        <dbReference type="ChEBI" id="CHEBI:29108"/>
        <label>1</label>
    </ligand>
</feature>
<feature type="binding site" evidence="7">
    <location>
        <position position="159"/>
    </location>
    <ligand>
        <name>Ca(2+)</name>
        <dbReference type="ChEBI" id="CHEBI:29108"/>
        <label>1</label>
    </ligand>
</feature>
<feature type="binding site" evidence="5">
    <location>
        <position position="192"/>
    </location>
    <ligand>
        <name>Ca(2+)</name>
        <dbReference type="ChEBI" id="CHEBI:29108"/>
        <label>2</label>
    </ligand>
</feature>
<feature type="binding site" evidence="5">
    <location>
        <position position="194"/>
    </location>
    <ligand>
        <name>Ca(2+)</name>
        <dbReference type="ChEBI" id="CHEBI:29108"/>
        <label>2</label>
    </ligand>
</feature>
<feature type="binding site" evidence="5">
    <location>
        <position position="196"/>
    </location>
    <ligand>
        <name>Ca(2+)</name>
        <dbReference type="ChEBI" id="CHEBI:29108"/>
        <label>2</label>
    </ligand>
</feature>
<feature type="binding site" evidence="5">
    <location>
        <position position="203"/>
    </location>
    <ligand>
        <name>Ca(2+)</name>
        <dbReference type="ChEBI" id="CHEBI:29108"/>
        <label>2</label>
    </ligand>
</feature>
<feature type="glycosylation site" description="N-linked (GlcNAc...) asparagine" evidence="3">
    <location>
        <position position="176"/>
    </location>
</feature>
<feature type="disulfide bond" evidence="2">
    <location>
        <begin position="38"/>
        <end position="96"/>
    </location>
</feature>
<name>FKB14_PONAB</name>
<sequence>MRLFLWNAVLTLFVTSLIGALIPEPEVKIEVLQKPFICHRKTKGGDLMLVHYEGYLEKDGSLFHSTHKHNNGQPIWFTLGILEALKGWDQGLKGMCVGEKRKLIIPPALGYGKEGKGKIPPESTLIFNIDLLEIRNGPRSHESFQEMDLNDDWKLSKDEVKAYLKKEFEKHGAVVNESHHDALVEDIFDKEDEDKDGFISAREFTYKHDEL</sequence>
<accession>Q5R941</accession>
<gene>
    <name type="primary">FKBP14</name>
</gene>
<dbReference type="EC" id="5.2.1.8" evidence="2"/>
<dbReference type="EMBL" id="CR859554">
    <property type="protein sequence ID" value="CAH91719.1"/>
    <property type="molecule type" value="mRNA"/>
</dbReference>
<dbReference type="RefSeq" id="NP_001127454.1">
    <property type="nucleotide sequence ID" value="NM_001133982.1"/>
</dbReference>
<dbReference type="SMR" id="Q5R941"/>
<dbReference type="FunCoup" id="Q5R941">
    <property type="interactions" value="188"/>
</dbReference>
<dbReference type="STRING" id="9601.ENSPPYP00000019820"/>
<dbReference type="GlyCosmos" id="Q5R941">
    <property type="glycosylation" value="1 site, No reported glycans"/>
</dbReference>
<dbReference type="GeneID" id="100174527"/>
<dbReference type="KEGG" id="pon:100174527"/>
<dbReference type="CTD" id="55033"/>
<dbReference type="eggNOG" id="KOG0549">
    <property type="taxonomic scope" value="Eukaryota"/>
</dbReference>
<dbReference type="InParanoid" id="Q5R941"/>
<dbReference type="OrthoDB" id="1902587at2759"/>
<dbReference type="Proteomes" id="UP000001595">
    <property type="component" value="Unplaced"/>
</dbReference>
<dbReference type="GO" id="GO:0005788">
    <property type="term" value="C:endoplasmic reticulum lumen"/>
    <property type="evidence" value="ECO:0007669"/>
    <property type="project" value="UniProtKB-SubCell"/>
</dbReference>
<dbReference type="GO" id="GO:0005509">
    <property type="term" value="F:calcium ion binding"/>
    <property type="evidence" value="ECO:0007669"/>
    <property type="project" value="InterPro"/>
</dbReference>
<dbReference type="GO" id="GO:0003755">
    <property type="term" value="F:peptidyl-prolyl cis-trans isomerase activity"/>
    <property type="evidence" value="ECO:0007669"/>
    <property type="project" value="UniProtKB-KW"/>
</dbReference>
<dbReference type="FunFam" id="3.10.50.40:FF:000006">
    <property type="entry name" value="Peptidyl-prolyl cis-trans isomerase"/>
    <property type="match status" value="1"/>
</dbReference>
<dbReference type="FunFam" id="1.10.238.10:FF:000118">
    <property type="entry name" value="Peptidylprolyl isomerase"/>
    <property type="match status" value="1"/>
</dbReference>
<dbReference type="Gene3D" id="3.10.50.40">
    <property type="match status" value="1"/>
</dbReference>
<dbReference type="Gene3D" id="1.10.238.10">
    <property type="entry name" value="EF-hand"/>
    <property type="match status" value="1"/>
</dbReference>
<dbReference type="InterPro" id="IPR011992">
    <property type="entry name" value="EF-hand-dom_pair"/>
</dbReference>
<dbReference type="InterPro" id="IPR018247">
    <property type="entry name" value="EF_Hand_1_Ca_BS"/>
</dbReference>
<dbReference type="InterPro" id="IPR002048">
    <property type="entry name" value="EF_hand_dom"/>
</dbReference>
<dbReference type="InterPro" id="IPR046357">
    <property type="entry name" value="PPIase_dom_sf"/>
</dbReference>
<dbReference type="InterPro" id="IPR052273">
    <property type="entry name" value="PPIase_FKBP"/>
</dbReference>
<dbReference type="InterPro" id="IPR001179">
    <property type="entry name" value="PPIase_FKBP_dom"/>
</dbReference>
<dbReference type="PANTHER" id="PTHR46222:SF1">
    <property type="entry name" value="PEPTIDYL-PROLYL CIS-TRANS ISOMERASE FKBP14"/>
    <property type="match status" value="1"/>
</dbReference>
<dbReference type="PANTHER" id="PTHR46222">
    <property type="entry name" value="PEPTIDYL-PROLYL CIS-TRANS ISOMERASE FKBP7/14"/>
    <property type="match status" value="1"/>
</dbReference>
<dbReference type="Pfam" id="PF00254">
    <property type="entry name" value="FKBP_C"/>
    <property type="match status" value="1"/>
</dbReference>
<dbReference type="SUPFAM" id="SSF47473">
    <property type="entry name" value="EF-hand"/>
    <property type="match status" value="1"/>
</dbReference>
<dbReference type="SUPFAM" id="SSF54534">
    <property type="entry name" value="FKBP-like"/>
    <property type="match status" value="1"/>
</dbReference>
<dbReference type="PROSITE" id="PS00018">
    <property type="entry name" value="EF_HAND_1"/>
    <property type="match status" value="1"/>
</dbReference>
<dbReference type="PROSITE" id="PS50222">
    <property type="entry name" value="EF_HAND_2"/>
    <property type="match status" value="2"/>
</dbReference>
<dbReference type="PROSITE" id="PS00014">
    <property type="entry name" value="ER_TARGET"/>
    <property type="match status" value="1"/>
</dbReference>
<dbReference type="PROSITE" id="PS50059">
    <property type="entry name" value="FKBP_PPIASE"/>
    <property type="match status" value="1"/>
</dbReference>
<evidence type="ECO:0000250" key="1"/>
<evidence type="ECO:0000250" key="2">
    <source>
        <dbReference type="UniProtKB" id="Q9NWM8"/>
    </source>
</evidence>
<evidence type="ECO:0000255" key="3"/>
<evidence type="ECO:0000255" key="4">
    <source>
        <dbReference type="PROSITE-ProRule" id="PRU00277"/>
    </source>
</evidence>
<evidence type="ECO:0000255" key="5">
    <source>
        <dbReference type="PROSITE-ProRule" id="PRU00448"/>
    </source>
</evidence>
<evidence type="ECO:0000255" key="6">
    <source>
        <dbReference type="PROSITE-ProRule" id="PRU10138"/>
    </source>
</evidence>
<evidence type="ECO:0000305" key="7"/>
<organism>
    <name type="scientific">Pongo abelii</name>
    <name type="common">Sumatran orangutan</name>
    <name type="synonym">Pongo pygmaeus abelii</name>
    <dbReference type="NCBI Taxonomy" id="9601"/>
    <lineage>
        <taxon>Eukaryota</taxon>
        <taxon>Metazoa</taxon>
        <taxon>Chordata</taxon>
        <taxon>Craniata</taxon>
        <taxon>Vertebrata</taxon>
        <taxon>Euteleostomi</taxon>
        <taxon>Mammalia</taxon>
        <taxon>Eutheria</taxon>
        <taxon>Euarchontoglires</taxon>
        <taxon>Primates</taxon>
        <taxon>Haplorrhini</taxon>
        <taxon>Catarrhini</taxon>
        <taxon>Hominidae</taxon>
        <taxon>Pongo</taxon>
    </lineage>
</organism>